<reference key="1">
    <citation type="journal article" date="1993" name="Mech. Dev.">
        <title>A Minute encoding a ribosomal protein enhances wing morphogenesis mutants.</title>
        <authorList>
            <person name="Hart K."/>
            <person name="Klein T."/>
            <person name="Wilcox M."/>
        </authorList>
    </citation>
    <scope>NUCLEOTIDE SEQUENCE [GENOMIC DNA]</scope>
</reference>
<reference key="2">
    <citation type="journal article" date="2000" name="Science">
        <title>The genome sequence of Drosophila melanogaster.</title>
        <authorList>
            <person name="Adams M.D."/>
            <person name="Celniker S.E."/>
            <person name="Holt R.A."/>
            <person name="Evans C.A."/>
            <person name="Gocayne J.D."/>
            <person name="Amanatides P.G."/>
            <person name="Scherer S.E."/>
            <person name="Li P.W."/>
            <person name="Hoskins R.A."/>
            <person name="Galle R.F."/>
            <person name="George R.A."/>
            <person name="Lewis S.E."/>
            <person name="Richards S."/>
            <person name="Ashburner M."/>
            <person name="Henderson S.N."/>
            <person name="Sutton G.G."/>
            <person name="Wortman J.R."/>
            <person name="Yandell M.D."/>
            <person name="Zhang Q."/>
            <person name="Chen L.X."/>
            <person name="Brandon R.C."/>
            <person name="Rogers Y.-H.C."/>
            <person name="Blazej R.G."/>
            <person name="Champe M."/>
            <person name="Pfeiffer B.D."/>
            <person name="Wan K.H."/>
            <person name="Doyle C."/>
            <person name="Baxter E.G."/>
            <person name="Helt G."/>
            <person name="Nelson C.R."/>
            <person name="Miklos G.L.G."/>
            <person name="Abril J.F."/>
            <person name="Agbayani A."/>
            <person name="An H.-J."/>
            <person name="Andrews-Pfannkoch C."/>
            <person name="Baldwin D."/>
            <person name="Ballew R.M."/>
            <person name="Basu A."/>
            <person name="Baxendale J."/>
            <person name="Bayraktaroglu L."/>
            <person name="Beasley E.M."/>
            <person name="Beeson K.Y."/>
            <person name="Benos P.V."/>
            <person name="Berman B.P."/>
            <person name="Bhandari D."/>
            <person name="Bolshakov S."/>
            <person name="Borkova D."/>
            <person name="Botchan M.R."/>
            <person name="Bouck J."/>
            <person name="Brokstein P."/>
            <person name="Brottier P."/>
            <person name="Burtis K.C."/>
            <person name="Busam D.A."/>
            <person name="Butler H."/>
            <person name="Cadieu E."/>
            <person name="Center A."/>
            <person name="Chandra I."/>
            <person name="Cherry J.M."/>
            <person name="Cawley S."/>
            <person name="Dahlke C."/>
            <person name="Davenport L.B."/>
            <person name="Davies P."/>
            <person name="de Pablos B."/>
            <person name="Delcher A."/>
            <person name="Deng Z."/>
            <person name="Mays A.D."/>
            <person name="Dew I."/>
            <person name="Dietz S.M."/>
            <person name="Dodson K."/>
            <person name="Doup L.E."/>
            <person name="Downes M."/>
            <person name="Dugan-Rocha S."/>
            <person name="Dunkov B.C."/>
            <person name="Dunn P."/>
            <person name="Durbin K.J."/>
            <person name="Evangelista C.C."/>
            <person name="Ferraz C."/>
            <person name="Ferriera S."/>
            <person name="Fleischmann W."/>
            <person name="Fosler C."/>
            <person name="Gabrielian A.E."/>
            <person name="Garg N.S."/>
            <person name="Gelbart W.M."/>
            <person name="Glasser K."/>
            <person name="Glodek A."/>
            <person name="Gong F."/>
            <person name="Gorrell J.H."/>
            <person name="Gu Z."/>
            <person name="Guan P."/>
            <person name="Harris M."/>
            <person name="Harris N.L."/>
            <person name="Harvey D.A."/>
            <person name="Heiman T.J."/>
            <person name="Hernandez J.R."/>
            <person name="Houck J."/>
            <person name="Hostin D."/>
            <person name="Houston K.A."/>
            <person name="Howland T.J."/>
            <person name="Wei M.-H."/>
            <person name="Ibegwam C."/>
            <person name="Jalali M."/>
            <person name="Kalush F."/>
            <person name="Karpen G.H."/>
            <person name="Ke Z."/>
            <person name="Kennison J.A."/>
            <person name="Ketchum K.A."/>
            <person name="Kimmel B.E."/>
            <person name="Kodira C.D."/>
            <person name="Kraft C.L."/>
            <person name="Kravitz S."/>
            <person name="Kulp D."/>
            <person name="Lai Z."/>
            <person name="Lasko P."/>
            <person name="Lei Y."/>
            <person name="Levitsky A.A."/>
            <person name="Li J.H."/>
            <person name="Li Z."/>
            <person name="Liang Y."/>
            <person name="Lin X."/>
            <person name="Liu X."/>
            <person name="Mattei B."/>
            <person name="McIntosh T.C."/>
            <person name="McLeod M.P."/>
            <person name="McPherson D."/>
            <person name="Merkulov G."/>
            <person name="Milshina N.V."/>
            <person name="Mobarry C."/>
            <person name="Morris J."/>
            <person name="Moshrefi A."/>
            <person name="Mount S.M."/>
            <person name="Moy M."/>
            <person name="Murphy B."/>
            <person name="Murphy L."/>
            <person name="Muzny D.M."/>
            <person name="Nelson D.L."/>
            <person name="Nelson D.R."/>
            <person name="Nelson K.A."/>
            <person name="Nixon K."/>
            <person name="Nusskern D.R."/>
            <person name="Pacleb J.M."/>
            <person name="Palazzolo M."/>
            <person name="Pittman G.S."/>
            <person name="Pan S."/>
            <person name="Pollard J."/>
            <person name="Puri V."/>
            <person name="Reese M.G."/>
            <person name="Reinert K."/>
            <person name="Remington K."/>
            <person name="Saunders R.D.C."/>
            <person name="Scheeler F."/>
            <person name="Shen H."/>
            <person name="Shue B.C."/>
            <person name="Siden-Kiamos I."/>
            <person name="Simpson M."/>
            <person name="Skupski M.P."/>
            <person name="Smith T.J."/>
            <person name="Spier E."/>
            <person name="Spradling A.C."/>
            <person name="Stapleton M."/>
            <person name="Strong R."/>
            <person name="Sun E."/>
            <person name="Svirskas R."/>
            <person name="Tector C."/>
            <person name="Turner R."/>
            <person name="Venter E."/>
            <person name="Wang A.H."/>
            <person name="Wang X."/>
            <person name="Wang Z.-Y."/>
            <person name="Wassarman D.A."/>
            <person name="Weinstock G.M."/>
            <person name="Weissenbach J."/>
            <person name="Williams S.M."/>
            <person name="Woodage T."/>
            <person name="Worley K.C."/>
            <person name="Wu D."/>
            <person name="Yang S."/>
            <person name="Yao Q.A."/>
            <person name="Ye J."/>
            <person name="Yeh R.-F."/>
            <person name="Zaveri J.S."/>
            <person name="Zhan M."/>
            <person name="Zhang G."/>
            <person name="Zhao Q."/>
            <person name="Zheng L."/>
            <person name="Zheng X.H."/>
            <person name="Zhong F.N."/>
            <person name="Zhong W."/>
            <person name="Zhou X."/>
            <person name="Zhu S.C."/>
            <person name="Zhu X."/>
            <person name="Smith H.O."/>
            <person name="Gibbs R.A."/>
            <person name="Myers E.W."/>
            <person name="Rubin G.M."/>
            <person name="Venter J.C."/>
        </authorList>
    </citation>
    <scope>NUCLEOTIDE SEQUENCE [LARGE SCALE GENOMIC DNA]</scope>
    <source>
        <strain>Berkeley</strain>
    </source>
</reference>
<reference key="3">
    <citation type="journal article" date="2002" name="Genome Biol.">
        <title>Annotation of the Drosophila melanogaster euchromatic genome: a systematic review.</title>
        <authorList>
            <person name="Misra S."/>
            <person name="Crosby M.A."/>
            <person name="Mungall C.J."/>
            <person name="Matthews B.B."/>
            <person name="Campbell K.S."/>
            <person name="Hradecky P."/>
            <person name="Huang Y."/>
            <person name="Kaminker J.S."/>
            <person name="Millburn G.H."/>
            <person name="Prochnik S.E."/>
            <person name="Smith C.D."/>
            <person name="Tupy J.L."/>
            <person name="Whitfield E.J."/>
            <person name="Bayraktaroglu L."/>
            <person name="Berman B.P."/>
            <person name="Bettencourt B.R."/>
            <person name="Celniker S.E."/>
            <person name="de Grey A.D.N.J."/>
            <person name="Drysdale R.A."/>
            <person name="Harris N.L."/>
            <person name="Richter J."/>
            <person name="Russo S."/>
            <person name="Schroeder A.J."/>
            <person name="Shu S.Q."/>
            <person name="Stapleton M."/>
            <person name="Yamada C."/>
            <person name="Ashburner M."/>
            <person name="Gelbart W.M."/>
            <person name="Rubin G.M."/>
            <person name="Lewis S.E."/>
        </authorList>
    </citation>
    <scope>GENOME REANNOTATION</scope>
    <source>
        <strain>Berkeley</strain>
    </source>
</reference>
<reference key="4">
    <citation type="journal article" date="2002" name="Genome Biol.">
        <title>A Drosophila full-length cDNA resource.</title>
        <authorList>
            <person name="Stapleton M."/>
            <person name="Carlson J.W."/>
            <person name="Brokstein P."/>
            <person name="Yu C."/>
            <person name="Champe M."/>
            <person name="George R.A."/>
            <person name="Guarin H."/>
            <person name="Kronmiller B."/>
            <person name="Pacleb J.M."/>
            <person name="Park S."/>
            <person name="Wan K.H."/>
            <person name="Rubin G.M."/>
            <person name="Celniker S.E."/>
        </authorList>
    </citation>
    <scope>NUCLEOTIDE SEQUENCE [LARGE SCALE MRNA]</scope>
    <source>
        <strain>Berkeley</strain>
        <tissue>Embryo</tissue>
    </source>
</reference>
<reference key="5">
    <citation type="submission" date="2006-01" db="EMBL/GenBank/DDBJ databases">
        <authorList>
            <person name="Stapleton M."/>
            <person name="Carlson J.W."/>
            <person name="Chavez C."/>
            <person name="Frise E."/>
            <person name="George R.A."/>
            <person name="Pacleb J.M."/>
            <person name="Park S."/>
            <person name="Wan K.H."/>
            <person name="Yu C."/>
            <person name="Celniker S.E."/>
        </authorList>
    </citation>
    <scope>NUCLEOTIDE SEQUENCE [LARGE SCALE MRNA]</scope>
    <source>
        <strain>Berkeley</strain>
    </source>
</reference>
<reference key="6">
    <citation type="journal article" date="2013" name="Nature">
        <title>Structures of the human and Drosophila 80S ribosome.</title>
        <authorList>
            <person name="Anger A.M."/>
            <person name="Armache J.P."/>
            <person name="Berninghausen O."/>
            <person name="Habeck M."/>
            <person name="Subklewe M."/>
            <person name="Wilson D.N."/>
            <person name="Beckmann R."/>
        </authorList>
    </citation>
    <scope>STRUCTURE BY ELECTRON MICROSCOPY (6.0 ANGSTROMS) OF THE 80S RIBOSOME</scope>
</reference>
<protein>
    <recommendedName>
        <fullName evidence="2">Large ribosomal subunit protein eL19</fullName>
    </recommendedName>
    <alternativeName>
        <fullName>60S ribosomal protein L19</fullName>
    </alternativeName>
</protein>
<gene>
    <name type="primary">RpL19</name>
    <name type="synonym">M(2)60E</name>
    <name type="ORF">CG2746</name>
</gene>
<sequence length="203" mass="23998">MSSLKLQKRLAASVLRCGKKKVWLDPNEINEIANTNSRQNIRKLIKDGLIIKKPVVVHSRYRVRKNTEARRKGRHCGFGKRKGTANARMPTKLLWMQRQRVLRRLLKKYRDSKKIDRHLYHDLYMKCKGNVFKNKRVLMEYIHKKKAEKQRSKMLADQAEARRQKVREARKRREERIATKKQELIALHAKEDEIAAKAATAGH</sequence>
<organism>
    <name type="scientific">Drosophila melanogaster</name>
    <name type="common">Fruit fly</name>
    <dbReference type="NCBI Taxonomy" id="7227"/>
    <lineage>
        <taxon>Eukaryota</taxon>
        <taxon>Metazoa</taxon>
        <taxon>Ecdysozoa</taxon>
        <taxon>Arthropoda</taxon>
        <taxon>Hexapoda</taxon>
        <taxon>Insecta</taxon>
        <taxon>Pterygota</taxon>
        <taxon>Neoptera</taxon>
        <taxon>Endopterygota</taxon>
        <taxon>Diptera</taxon>
        <taxon>Brachycera</taxon>
        <taxon>Muscomorpha</taxon>
        <taxon>Ephydroidea</taxon>
        <taxon>Drosophilidae</taxon>
        <taxon>Drosophila</taxon>
        <taxon>Sophophora</taxon>
    </lineage>
</organism>
<accession>P36241</accession>
<accession>A4UZV5</accession>
<accession>Q29QX6</accession>
<accession>Q9W0X4</accession>
<name>RL19_DROME</name>
<keyword id="KW-0002">3D-structure</keyword>
<keyword id="KW-1185">Reference proteome</keyword>
<keyword id="KW-0687">Ribonucleoprotein</keyword>
<keyword id="KW-0689">Ribosomal protein</keyword>
<evidence type="ECO:0000256" key="1">
    <source>
        <dbReference type="SAM" id="MobiDB-lite"/>
    </source>
</evidence>
<evidence type="ECO:0000305" key="2"/>
<proteinExistence type="evidence at protein level"/>
<feature type="chain" id="PRO_0000131178" description="Large ribosomal subunit protein eL19">
    <location>
        <begin position="1"/>
        <end position="203"/>
    </location>
</feature>
<feature type="region of interest" description="Disordered" evidence="1">
    <location>
        <begin position="152"/>
        <end position="175"/>
    </location>
</feature>
<feature type="compositionally biased region" description="Basic and acidic residues" evidence="1">
    <location>
        <begin position="159"/>
        <end position="175"/>
    </location>
</feature>
<feature type="sequence conflict" description="In Ref. 1; CAA52784." evidence="2" ref="1">
    <original>G</original>
    <variation>D</variation>
    <location>
        <position position="73"/>
    </location>
</feature>
<feature type="sequence conflict" description="In Ref. 1; CAA52784." evidence="2" ref="1">
    <original>RVL</original>
    <variation>PFC</variation>
    <location>
        <begin position="100"/>
        <end position="102"/>
    </location>
</feature>
<comment type="similarity">
    <text evidence="2">Belongs to the eukaryotic ribosomal protein eL19 family.</text>
</comment>
<comment type="sequence caution" evidence="2">
    <conflict type="erroneous initiation">
        <sequence resource="EMBL-CDS" id="AAL28765"/>
    </conflict>
</comment>
<comment type="sequence caution" evidence="2">
    <conflict type="erroneous initiation">
        <sequence resource="EMBL-CDS" id="ABC86326"/>
    </conflict>
</comment>
<dbReference type="EMBL" id="X74776">
    <property type="protein sequence ID" value="CAA52784.1"/>
    <property type="molecule type" value="Genomic_DNA"/>
</dbReference>
<dbReference type="EMBL" id="AE013599">
    <property type="protein sequence ID" value="AAF47305.1"/>
    <property type="molecule type" value="Genomic_DNA"/>
</dbReference>
<dbReference type="EMBL" id="AE013599">
    <property type="protein sequence ID" value="AAS64772.1"/>
    <property type="molecule type" value="Genomic_DNA"/>
</dbReference>
<dbReference type="EMBL" id="AY061217">
    <property type="protein sequence ID" value="AAL28765.2"/>
    <property type="status" value="ALT_INIT"/>
    <property type="molecule type" value="mRNA"/>
</dbReference>
<dbReference type="EMBL" id="BT024264">
    <property type="protein sequence ID" value="ABC86326.1"/>
    <property type="status" value="ALT_INIT"/>
    <property type="molecule type" value="mRNA"/>
</dbReference>
<dbReference type="PIR" id="A61627">
    <property type="entry name" value="A61627"/>
</dbReference>
<dbReference type="RefSeq" id="NP_476631.1">
    <property type="nucleotide sequence ID" value="NM_057283.5"/>
</dbReference>
<dbReference type="RefSeq" id="NP_995941.1">
    <property type="nucleotide sequence ID" value="NM_206219.2"/>
</dbReference>
<dbReference type="PDB" id="4V6W">
    <property type="method" value="EM"/>
    <property type="resolution" value="6.00 A"/>
    <property type="chains" value="CR=1-203"/>
</dbReference>
<dbReference type="PDB" id="6XU6">
    <property type="method" value="EM"/>
    <property type="resolution" value="3.50 A"/>
    <property type="chains" value="CR=1-203"/>
</dbReference>
<dbReference type="PDB" id="6XU7">
    <property type="method" value="EM"/>
    <property type="resolution" value="4.90 A"/>
    <property type="chains" value="CR=1-203"/>
</dbReference>
<dbReference type="PDB" id="6XU8">
    <property type="method" value="EM"/>
    <property type="resolution" value="3.00 A"/>
    <property type="chains" value="CR=1-203"/>
</dbReference>
<dbReference type="PDBsum" id="4V6W"/>
<dbReference type="PDBsum" id="6XU6"/>
<dbReference type="PDBsum" id="6XU7"/>
<dbReference type="PDBsum" id="6XU8"/>
<dbReference type="EMDB" id="EMD-10622"/>
<dbReference type="EMDB" id="EMD-10623"/>
<dbReference type="EMDB" id="EMD-10624"/>
<dbReference type="SMR" id="P36241"/>
<dbReference type="BioGRID" id="63563">
    <property type="interactions" value="112"/>
</dbReference>
<dbReference type="DIP" id="DIP-19985N"/>
<dbReference type="FunCoup" id="P36241">
    <property type="interactions" value="1502"/>
</dbReference>
<dbReference type="IntAct" id="P36241">
    <property type="interactions" value="7"/>
</dbReference>
<dbReference type="MINT" id="P36241"/>
<dbReference type="STRING" id="7227.FBpp0072312"/>
<dbReference type="PaxDb" id="7227-FBpp0072312"/>
<dbReference type="DNASU" id="37995"/>
<dbReference type="EnsemblMetazoa" id="FBtr0072405">
    <property type="protein sequence ID" value="FBpp0072312"/>
    <property type="gene ID" value="FBgn0285950"/>
</dbReference>
<dbReference type="EnsemblMetazoa" id="FBtr0072406">
    <property type="protein sequence ID" value="FBpp0089141"/>
    <property type="gene ID" value="FBgn0285950"/>
</dbReference>
<dbReference type="GeneID" id="37995"/>
<dbReference type="KEGG" id="dme:Dmel_CG2746"/>
<dbReference type="AGR" id="FB:FBgn0285950"/>
<dbReference type="CTD" id="6143"/>
<dbReference type="FlyBase" id="FBgn0285950">
    <property type="gene designation" value="RpL19"/>
</dbReference>
<dbReference type="VEuPathDB" id="VectorBase:FBgn0285950"/>
<dbReference type="eggNOG" id="KOG1696">
    <property type="taxonomic scope" value="Eukaryota"/>
</dbReference>
<dbReference type="GeneTree" id="ENSGT00390000012628"/>
<dbReference type="HOGENOM" id="CLU_083919_0_1_1"/>
<dbReference type="InParanoid" id="P36241"/>
<dbReference type="OMA" id="NRVWIDP"/>
<dbReference type="OrthoDB" id="5407653at2759"/>
<dbReference type="PhylomeDB" id="P36241"/>
<dbReference type="Reactome" id="R-DME-156827">
    <property type="pathway name" value="L13a-mediated translational silencing of Ceruloplasmin expression"/>
</dbReference>
<dbReference type="Reactome" id="R-DME-1799339">
    <property type="pathway name" value="SRP-dependent cotranslational protein targeting to membrane"/>
</dbReference>
<dbReference type="Reactome" id="R-DME-72689">
    <property type="pathway name" value="Formation of a pool of free 40S subunits"/>
</dbReference>
<dbReference type="Reactome" id="R-DME-72706">
    <property type="pathway name" value="GTP hydrolysis and joining of the 60S ribosomal subunit"/>
</dbReference>
<dbReference type="Reactome" id="R-DME-975956">
    <property type="pathway name" value="Nonsense Mediated Decay (NMD) independent of the Exon Junction Complex (EJC)"/>
</dbReference>
<dbReference type="Reactome" id="R-DME-975957">
    <property type="pathway name" value="Nonsense Mediated Decay (NMD) enhanced by the Exon Junction Complex (EJC)"/>
</dbReference>
<dbReference type="SignaLink" id="P36241"/>
<dbReference type="BioGRID-ORCS" id="37995">
    <property type="hits" value="1 hit in 1 CRISPR screen"/>
</dbReference>
<dbReference type="ChiTaRS" id="RpL19">
    <property type="organism name" value="fly"/>
</dbReference>
<dbReference type="GenomeRNAi" id="37995"/>
<dbReference type="PRO" id="PR:P36241"/>
<dbReference type="Proteomes" id="UP000000803">
    <property type="component" value="Chromosome 2R"/>
</dbReference>
<dbReference type="Bgee" id="FBgn0285950">
    <property type="expression patterns" value="Expressed in wing disc and 295 other cell types or tissues"/>
</dbReference>
<dbReference type="GO" id="GO:0022625">
    <property type="term" value="C:cytosolic large ribosomal subunit"/>
    <property type="evidence" value="ECO:0000318"/>
    <property type="project" value="GO_Central"/>
</dbReference>
<dbReference type="GO" id="GO:0022626">
    <property type="term" value="C:cytosolic ribosome"/>
    <property type="evidence" value="ECO:0000314"/>
    <property type="project" value="FlyBase"/>
</dbReference>
<dbReference type="GO" id="GO:0003723">
    <property type="term" value="F:RNA binding"/>
    <property type="evidence" value="ECO:0000318"/>
    <property type="project" value="GO_Central"/>
</dbReference>
<dbReference type="GO" id="GO:0003735">
    <property type="term" value="F:structural constituent of ribosome"/>
    <property type="evidence" value="ECO:0000314"/>
    <property type="project" value="FlyBase"/>
</dbReference>
<dbReference type="GO" id="GO:0002181">
    <property type="term" value="P:cytoplasmic translation"/>
    <property type="evidence" value="ECO:0000304"/>
    <property type="project" value="FlyBase"/>
</dbReference>
<dbReference type="CDD" id="cd01417">
    <property type="entry name" value="Ribosomal_L19e_E"/>
    <property type="match status" value="1"/>
</dbReference>
<dbReference type="FunFam" id="1.10.1200.240:FF:000001">
    <property type="entry name" value="Ribosomal protein L19"/>
    <property type="match status" value="1"/>
</dbReference>
<dbReference type="FunFam" id="1.10.1650.10:FF:000001">
    <property type="entry name" value="Ribosomal protein L19"/>
    <property type="match status" value="1"/>
</dbReference>
<dbReference type="Gene3D" id="1.10.1200.240">
    <property type="match status" value="1"/>
</dbReference>
<dbReference type="Gene3D" id="1.10.1650.10">
    <property type="match status" value="1"/>
</dbReference>
<dbReference type="HAMAP" id="MF_01475">
    <property type="entry name" value="Ribosomal_eL19"/>
    <property type="match status" value="1"/>
</dbReference>
<dbReference type="InterPro" id="IPR035970">
    <property type="entry name" value="60S_ribosomal_eL19_sf"/>
</dbReference>
<dbReference type="InterPro" id="IPR039547">
    <property type="entry name" value="Ribosomal_eL19"/>
</dbReference>
<dbReference type="InterPro" id="IPR023638">
    <property type="entry name" value="Ribosomal_eL19_CS"/>
</dbReference>
<dbReference type="InterPro" id="IPR000196">
    <property type="entry name" value="Ribosomal_eL19_dom"/>
</dbReference>
<dbReference type="InterPro" id="IPR015972">
    <property type="entry name" value="Ribosomal_eL19_dom1"/>
</dbReference>
<dbReference type="InterPro" id="IPR033935">
    <property type="entry name" value="Ribosomal_eL19_euk"/>
</dbReference>
<dbReference type="NCBIfam" id="NF006343">
    <property type="entry name" value="PRK08570.1"/>
    <property type="match status" value="1"/>
</dbReference>
<dbReference type="PANTHER" id="PTHR10722">
    <property type="entry name" value="60S RIBOSOMAL PROTEIN L19"/>
    <property type="match status" value="1"/>
</dbReference>
<dbReference type="Pfam" id="PF01280">
    <property type="entry name" value="Ribosomal_L19e"/>
    <property type="match status" value="1"/>
</dbReference>
<dbReference type="Pfam" id="PF25476">
    <property type="entry name" value="Ribosomal_L19e_C"/>
    <property type="match status" value="1"/>
</dbReference>
<dbReference type="SMART" id="SM01416">
    <property type="entry name" value="Ribosomal_L19e"/>
    <property type="match status" value="1"/>
</dbReference>
<dbReference type="SUPFAM" id="SSF48140">
    <property type="entry name" value="Ribosomal protein L19 (L19e)"/>
    <property type="match status" value="1"/>
</dbReference>
<dbReference type="PROSITE" id="PS00526">
    <property type="entry name" value="RIBOSOMAL_L19E"/>
    <property type="match status" value="1"/>
</dbReference>